<dbReference type="EMBL" id="M10062">
    <property type="protein sequence ID" value="AAA37291.1"/>
    <property type="molecule type" value="mRNA"/>
</dbReference>
<dbReference type="PIR" id="A01858">
    <property type="entry name" value="EBRTMS"/>
</dbReference>
<dbReference type="SMR" id="P03975"/>
<dbReference type="IntAct" id="P03975">
    <property type="interactions" value="1"/>
</dbReference>
<dbReference type="MINT" id="P03975"/>
<dbReference type="SwissPalm" id="P03975"/>
<dbReference type="PeptideAtlas" id="P03975"/>
<dbReference type="ProteomicsDB" id="267219"/>
<dbReference type="Pumba" id="P03975"/>
<dbReference type="MGI" id="MGI:96306">
    <property type="gene designation" value="Iap"/>
</dbReference>
<dbReference type="InParanoid" id="P03975"/>
<dbReference type="PRO" id="PR:P03975"/>
<dbReference type="Proteomes" id="UP000000589">
    <property type="component" value="Unplaced"/>
</dbReference>
<dbReference type="RNAct" id="P03975">
    <property type="molecule type" value="protein"/>
</dbReference>
<dbReference type="GO" id="GO:0019863">
    <property type="term" value="F:IgE binding"/>
    <property type="evidence" value="ECO:0007669"/>
    <property type="project" value="UniProtKB-KW"/>
</dbReference>
<dbReference type="GO" id="GO:0003676">
    <property type="term" value="F:nucleic acid binding"/>
    <property type="evidence" value="ECO:0007669"/>
    <property type="project" value="InterPro"/>
</dbReference>
<dbReference type="GO" id="GO:0015074">
    <property type="term" value="P:DNA integration"/>
    <property type="evidence" value="ECO:0007669"/>
    <property type="project" value="InterPro"/>
</dbReference>
<dbReference type="GO" id="GO:0016032">
    <property type="term" value="P:viral process"/>
    <property type="evidence" value="ECO:0007669"/>
    <property type="project" value="InterPro"/>
</dbReference>
<dbReference type="Gene3D" id="1.10.375.10">
    <property type="entry name" value="Human Immunodeficiency Virus Type 1 Capsid Protein"/>
    <property type="match status" value="1"/>
</dbReference>
<dbReference type="Gene3D" id="3.30.420.10">
    <property type="entry name" value="Ribonuclease H-like superfamily/Ribonuclease H"/>
    <property type="match status" value="1"/>
</dbReference>
<dbReference type="InterPro" id="IPR045345">
    <property type="entry name" value="Gag_p24_C"/>
</dbReference>
<dbReference type="InterPro" id="IPR001584">
    <property type="entry name" value="Integrase_cat-core"/>
</dbReference>
<dbReference type="InterPro" id="IPR050195">
    <property type="entry name" value="Primate_lentivir_Gag_pol-like"/>
</dbReference>
<dbReference type="InterPro" id="IPR008919">
    <property type="entry name" value="Retrov_capsid_N"/>
</dbReference>
<dbReference type="InterPro" id="IPR012337">
    <property type="entry name" value="RNaseH-like_sf"/>
</dbReference>
<dbReference type="InterPro" id="IPR036397">
    <property type="entry name" value="RNaseH_sf"/>
</dbReference>
<dbReference type="PANTHER" id="PTHR40389">
    <property type="entry name" value="ENDOGENOUS RETROVIRUS GROUP K MEMBER 24 GAG POLYPROTEIN-RELATED"/>
    <property type="match status" value="1"/>
</dbReference>
<dbReference type="PANTHER" id="PTHR40389:SF3">
    <property type="entry name" value="IGE-BINDING PROTEIN"/>
    <property type="match status" value="1"/>
</dbReference>
<dbReference type="Pfam" id="PF00607">
    <property type="entry name" value="Gag_p24"/>
    <property type="match status" value="1"/>
</dbReference>
<dbReference type="Pfam" id="PF19317">
    <property type="entry name" value="Gag_p24_C"/>
    <property type="match status" value="1"/>
</dbReference>
<dbReference type="Pfam" id="PF00665">
    <property type="entry name" value="rve"/>
    <property type="match status" value="1"/>
</dbReference>
<dbReference type="SUPFAM" id="SSF47353">
    <property type="entry name" value="Retrovirus capsid dimerization domain-like"/>
    <property type="match status" value="1"/>
</dbReference>
<dbReference type="SUPFAM" id="SSF47943">
    <property type="entry name" value="Retrovirus capsid protein, N-terminal core domain"/>
    <property type="match status" value="1"/>
</dbReference>
<dbReference type="SUPFAM" id="SSF53098">
    <property type="entry name" value="Ribonuclease H-like"/>
    <property type="match status" value="1"/>
</dbReference>
<dbReference type="PROSITE" id="PS50994">
    <property type="entry name" value="INTEGRASE"/>
    <property type="match status" value="1"/>
</dbReference>
<reference key="1">
    <citation type="journal article" date="1985" name="Proc. Natl. Acad. Sci. U.S.A.">
        <title>cDNA clones encoding IgE-binding factors from a rat-mouse T-cell hybridoma.</title>
        <authorList>
            <person name="Martens C.L."/>
            <person name="Huff T.F."/>
            <person name="Jardieu P."/>
            <person name="Trounstine M.L."/>
            <person name="Coffman R.L."/>
            <person name="Ishizaka K."/>
            <person name="Moore K.W."/>
        </authorList>
    </citation>
    <scope>NUCLEOTIDE SEQUENCE [MRNA]</scope>
</reference>
<keyword id="KW-0374">Hybridoma</keyword>
<keyword id="KW-0389">IgE-binding protein</keyword>
<keyword id="KW-1185">Reference proteome</keyword>
<name>IGEB_MOUSE</name>
<protein>
    <recommendedName>
        <fullName>IgE-binding protein</fullName>
    </recommendedName>
</protein>
<accession>P03975</accession>
<evidence type="ECO:0000255" key="1">
    <source>
        <dbReference type="PROSITE-ProRule" id="PRU00457"/>
    </source>
</evidence>
<evidence type="ECO:0000256" key="2">
    <source>
        <dbReference type="SAM" id="MobiDB-lite"/>
    </source>
</evidence>
<organism>
    <name type="scientific">Mus musculus</name>
    <name type="common">Mouse</name>
    <dbReference type="NCBI Taxonomy" id="10090"/>
    <lineage>
        <taxon>Eukaryota</taxon>
        <taxon>Metazoa</taxon>
        <taxon>Chordata</taxon>
        <taxon>Craniata</taxon>
        <taxon>Vertebrata</taxon>
        <taxon>Euteleostomi</taxon>
        <taxon>Mammalia</taxon>
        <taxon>Eutheria</taxon>
        <taxon>Euarchontoglires</taxon>
        <taxon>Glires</taxon>
        <taxon>Rodentia</taxon>
        <taxon>Myomorpha</taxon>
        <taxon>Muroidea</taxon>
        <taxon>Muridae</taxon>
        <taxon>Murinae</taxon>
        <taxon>Mus</taxon>
        <taxon>Mus</taxon>
    </lineage>
</organism>
<feature type="chain" id="PRO_0000084173" description="IgE-binding protein">
    <location>
        <begin position="1"/>
        <end position="557"/>
    </location>
</feature>
<feature type="domain" description="Integrase catalytic" evidence="1">
    <location>
        <begin position="344"/>
        <end position="534"/>
    </location>
</feature>
<feature type="region of interest" description="Disordered" evidence="2">
    <location>
        <begin position="113"/>
        <end position="172"/>
    </location>
</feature>
<feature type="compositionally biased region" description="Acidic residues" evidence="2">
    <location>
        <begin position="125"/>
        <end position="138"/>
    </location>
</feature>
<sequence length="557" mass="62747">MALQVMFGLEFFLVLEALLFLFTCYQVVKAGRILDEIQDKLSEVKRGERVGTKRKYGTQNKYTGLSKGLEPEEKLRLGRNTWREIRRKRGKREKKKDQLAEVSRKRSLCSSLDGLGKPALSSSEAGEESSSEETDWEEEAAHYQPANWSRKKPKAAGEGQFADWPQGSRLQGPPYAESPPCVVRQQCAERCAERQCAERQCADSFIPREEQRKIQQAFPVFEGAEGGRVHAPVEYLQIKEIAESVRKYGTNANFTLVQLDRLAGMALTPADWQTVVKAALPSMGKYMEWRALWHEAAQAQARANAAALTPEQRDWTFDLLTGQGAYSADQTNYHWGAYAQISSTAIRPGRRSRAGETTGQLTKIIQGPQESFSDFVARMTEAAERIFGESEQAAPLIEQLIYEQATKECRAVHSPKKEQRLTRLAQGLSRAWGKPRLLKTDNGPAYTSQKFQQFCRQMDVTHLTGLPYNPQGQGIVERAHRTLKAYLIKQKRGTFEETVPRAPRVSVSLALFTLNFLNIDAHGHTAAERHVQSQIGPMRWLNGKMSLIINGMARILS</sequence>
<comment type="miscellaneous">
    <text>This hybridoma was generated by fusion of rat lymphocytes with cells of the AKR mouse thyoma BW5147.</text>
</comment>
<comment type="miscellaneous">
    <text>This sequence binds only rat IgE.</text>
</comment>
<gene>
    <name type="primary">Iap</name>
</gene>
<proteinExistence type="evidence at transcript level"/>